<name>PROQ_ECO7I</name>
<sequence>MENQPKLNSSKEVIAFLAERFPHCFSAEGEARPLKIGIFQDLVDRVAGEMNLSKTQLRSALRLYTSSWRYLYGVKPGATRVDLDGNPCGELDEQHVEHARKQLEEAKARVQAQRAEQQAKKREAAAAAGEKEDAPRRERKPRPTTPRRKEGAERKPRAQKSVEKAPKTVKAPREEQHTPVSDISALTVGQALKVKAGQNAMDATVLEITKDGVRVQLNSGMSLIVRAEHLVF</sequence>
<accession>B7NS88</accession>
<organism>
    <name type="scientific">Escherichia coli O7:K1 (strain IAI39 / ExPEC)</name>
    <dbReference type="NCBI Taxonomy" id="585057"/>
    <lineage>
        <taxon>Bacteria</taxon>
        <taxon>Pseudomonadati</taxon>
        <taxon>Pseudomonadota</taxon>
        <taxon>Gammaproteobacteria</taxon>
        <taxon>Enterobacterales</taxon>
        <taxon>Enterobacteriaceae</taxon>
        <taxon>Escherichia</taxon>
    </lineage>
</organism>
<reference key="1">
    <citation type="journal article" date="2009" name="PLoS Genet.">
        <title>Organised genome dynamics in the Escherichia coli species results in highly diverse adaptive paths.</title>
        <authorList>
            <person name="Touchon M."/>
            <person name="Hoede C."/>
            <person name="Tenaillon O."/>
            <person name="Barbe V."/>
            <person name="Baeriswyl S."/>
            <person name="Bidet P."/>
            <person name="Bingen E."/>
            <person name="Bonacorsi S."/>
            <person name="Bouchier C."/>
            <person name="Bouvet O."/>
            <person name="Calteau A."/>
            <person name="Chiapello H."/>
            <person name="Clermont O."/>
            <person name="Cruveiller S."/>
            <person name="Danchin A."/>
            <person name="Diard M."/>
            <person name="Dossat C."/>
            <person name="Karoui M.E."/>
            <person name="Frapy E."/>
            <person name="Garry L."/>
            <person name="Ghigo J.M."/>
            <person name="Gilles A.M."/>
            <person name="Johnson J."/>
            <person name="Le Bouguenec C."/>
            <person name="Lescat M."/>
            <person name="Mangenot S."/>
            <person name="Martinez-Jehanne V."/>
            <person name="Matic I."/>
            <person name="Nassif X."/>
            <person name="Oztas S."/>
            <person name="Petit M.A."/>
            <person name="Pichon C."/>
            <person name="Rouy Z."/>
            <person name="Ruf C.S."/>
            <person name="Schneider D."/>
            <person name="Tourret J."/>
            <person name="Vacherie B."/>
            <person name="Vallenet D."/>
            <person name="Medigue C."/>
            <person name="Rocha E.P.C."/>
            <person name="Denamur E."/>
        </authorList>
    </citation>
    <scope>NUCLEOTIDE SEQUENCE [LARGE SCALE GENOMIC DNA]</scope>
    <source>
        <strain>IAI39 / ExPEC</strain>
    </source>
</reference>
<gene>
    <name evidence="1" type="primary">proQ</name>
    <name type="ordered locus">ECIAI39_1219</name>
</gene>
<evidence type="ECO:0000255" key="1">
    <source>
        <dbReference type="HAMAP-Rule" id="MF_00749"/>
    </source>
</evidence>
<evidence type="ECO:0000256" key="2">
    <source>
        <dbReference type="SAM" id="MobiDB-lite"/>
    </source>
</evidence>
<keyword id="KW-0143">Chaperone</keyword>
<keyword id="KW-0963">Cytoplasm</keyword>
<keyword id="KW-0694">RNA-binding</keyword>
<dbReference type="EMBL" id="CU928164">
    <property type="protein sequence ID" value="CAR17353.1"/>
    <property type="molecule type" value="Genomic_DNA"/>
</dbReference>
<dbReference type="RefSeq" id="WP_000431372.1">
    <property type="nucleotide sequence ID" value="NC_011750.1"/>
</dbReference>
<dbReference type="RefSeq" id="YP_002407227.1">
    <property type="nucleotide sequence ID" value="NC_011750.1"/>
</dbReference>
<dbReference type="SMR" id="B7NS88"/>
<dbReference type="STRING" id="585057.ECIAI39_1219"/>
<dbReference type="KEGG" id="ect:ECIAI39_1219"/>
<dbReference type="PATRIC" id="fig|585057.6.peg.1278"/>
<dbReference type="HOGENOM" id="CLU_113254_0_0_6"/>
<dbReference type="Proteomes" id="UP000000749">
    <property type="component" value="Chromosome"/>
</dbReference>
<dbReference type="GO" id="GO:0005829">
    <property type="term" value="C:cytosol"/>
    <property type="evidence" value="ECO:0007669"/>
    <property type="project" value="TreeGrafter"/>
</dbReference>
<dbReference type="GO" id="GO:0033592">
    <property type="term" value="F:RNA strand annealing activity"/>
    <property type="evidence" value="ECO:0007669"/>
    <property type="project" value="UniProtKB-UniRule"/>
</dbReference>
<dbReference type="GO" id="GO:0034057">
    <property type="term" value="F:RNA strand-exchange activity"/>
    <property type="evidence" value="ECO:0007669"/>
    <property type="project" value="UniProtKB-UniRule"/>
</dbReference>
<dbReference type="GO" id="GO:0010608">
    <property type="term" value="P:post-transcriptional regulation of gene expression"/>
    <property type="evidence" value="ECO:0007669"/>
    <property type="project" value="InterPro"/>
</dbReference>
<dbReference type="FunFam" id="1.10.1710.10:FF:000001">
    <property type="entry name" value="RNA chaperone ProQ"/>
    <property type="match status" value="1"/>
</dbReference>
<dbReference type="Gene3D" id="1.10.1710.10">
    <property type="entry name" value="ProQ/FinO domain"/>
    <property type="match status" value="1"/>
</dbReference>
<dbReference type="HAMAP" id="MF_00749">
    <property type="entry name" value="ProQ"/>
    <property type="match status" value="1"/>
</dbReference>
<dbReference type="InterPro" id="IPR023529">
    <property type="entry name" value="ProQ"/>
</dbReference>
<dbReference type="InterPro" id="IPR016103">
    <property type="entry name" value="ProQ/FinO"/>
</dbReference>
<dbReference type="InterPro" id="IPR036442">
    <property type="entry name" value="ProQ/FinO_sf"/>
</dbReference>
<dbReference type="InterPro" id="IPR035236">
    <property type="entry name" value="ProQ_C"/>
</dbReference>
<dbReference type="NCBIfam" id="NF003434">
    <property type="entry name" value="PRK04950.1"/>
    <property type="match status" value="1"/>
</dbReference>
<dbReference type="PANTHER" id="PTHR38106">
    <property type="entry name" value="RNA CHAPERONE PROQ"/>
    <property type="match status" value="1"/>
</dbReference>
<dbReference type="PANTHER" id="PTHR38106:SF1">
    <property type="entry name" value="RNA CHAPERONE PROQ"/>
    <property type="match status" value="1"/>
</dbReference>
<dbReference type="Pfam" id="PF04352">
    <property type="entry name" value="ProQ"/>
    <property type="match status" value="1"/>
</dbReference>
<dbReference type="Pfam" id="PF17516">
    <property type="entry name" value="ProQ_C"/>
    <property type="match status" value="1"/>
</dbReference>
<dbReference type="SMART" id="SM00945">
    <property type="entry name" value="ProQ"/>
    <property type="match status" value="1"/>
</dbReference>
<dbReference type="SUPFAM" id="SSF48657">
    <property type="entry name" value="FinO-like"/>
    <property type="match status" value="1"/>
</dbReference>
<feature type="chain" id="PRO_1000133291" description="RNA chaperone ProQ">
    <location>
        <begin position="1"/>
        <end position="232"/>
    </location>
</feature>
<feature type="region of interest" description="Disordered" evidence="2">
    <location>
        <begin position="105"/>
        <end position="182"/>
    </location>
</feature>
<feature type="compositionally biased region" description="Basic and acidic residues" evidence="2">
    <location>
        <begin position="117"/>
        <end position="136"/>
    </location>
</feature>
<feature type="compositionally biased region" description="Basic residues" evidence="2">
    <location>
        <begin position="137"/>
        <end position="146"/>
    </location>
</feature>
<feature type="compositionally biased region" description="Basic and acidic residues" evidence="2">
    <location>
        <begin position="147"/>
        <end position="177"/>
    </location>
</feature>
<proteinExistence type="inferred from homology"/>
<protein>
    <recommendedName>
        <fullName evidence="1">RNA chaperone ProQ</fullName>
    </recommendedName>
</protein>
<comment type="function">
    <text evidence="1">RNA chaperone with significant RNA binding, RNA strand exchange and RNA duplexing activities. May regulate ProP activity through an RNA-based, post-transcriptional mechanism.</text>
</comment>
<comment type="subcellular location">
    <subcellularLocation>
        <location evidence="1">Cytoplasm</location>
    </subcellularLocation>
</comment>
<comment type="similarity">
    <text evidence="1">Belongs to the ProQ family.</text>
</comment>